<name>MIND_OLTVI</name>
<protein>
    <recommendedName>
        <fullName>Putative septum site-determining protein MinD</fullName>
    </recommendedName>
</protein>
<sequence length="316" mass="35354">MAYSVSRLVCSDGSIFSSNTNFETPFQPRVFHPSTSSEINERPDLNLLEGTPRTIVVTSGKGGVGKTTATANLGMSIARLGYRVVLVDADIGLRNLDLLLGLENRVLYTAMDILDGQCRLDQALIRDKRWKNLSLLAISKNRQRYNVTRKRMNMLIESLQKQGYDYILIDCPAGIDVGFINAVSPAKEAIIVTTPEITSIRDADRVAGLLESNGIYNVKLLVNRVRSEMIQQNDMMSVRDVQEMLGIPLLGAIPEDNHVIISTNRGEPLVLKKKLTLSGIAFENAARRLIGKQDYFIDLQTPYRNVFQRFQQFLGF</sequence>
<organism>
    <name type="scientific">Oltmannsiellopsis viridis</name>
    <name type="common">Marine flagellate</name>
    <name type="synonym">Oltmannsiella viridis</name>
    <dbReference type="NCBI Taxonomy" id="51324"/>
    <lineage>
        <taxon>Eukaryota</taxon>
        <taxon>Viridiplantae</taxon>
        <taxon>Chlorophyta</taxon>
        <taxon>Ulvophyceae</taxon>
        <taxon>Oltmannsiellopsidales</taxon>
        <taxon>Oltmannsiellopsidaceae</taxon>
        <taxon>Oltmannsiellopsis</taxon>
    </lineage>
</organism>
<evidence type="ECO:0000250" key="1"/>
<evidence type="ECO:0000250" key="2">
    <source>
        <dbReference type="UniProtKB" id="Q72H90"/>
    </source>
</evidence>
<evidence type="ECO:0000305" key="3"/>
<feature type="chain" id="PRO_0000277443" description="Putative septum site-determining protein MinD">
    <location>
        <begin position="1"/>
        <end position="316"/>
    </location>
</feature>
<feature type="binding site" evidence="2">
    <location>
        <begin position="61"/>
        <end position="68"/>
    </location>
    <ligand>
        <name>ATP</name>
        <dbReference type="ChEBI" id="CHEBI:30616"/>
    </ligand>
</feature>
<gene>
    <name type="primary">minD</name>
</gene>
<proteinExistence type="inferred from homology"/>
<dbReference type="EMBL" id="DQ291132">
    <property type="protein sequence ID" value="ABB81959.1"/>
    <property type="molecule type" value="Genomic_DNA"/>
</dbReference>
<dbReference type="RefSeq" id="YP_635891.1">
    <property type="nucleotide sequence ID" value="NC_008099.1"/>
</dbReference>
<dbReference type="SMR" id="Q20EV4"/>
<dbReference type="GeneID" id="4100123"/>
<dbReference type="GO" id="GO:0009507">
    <property type="term" value="C:chloroplast"/>
    <property type="evidence" value="ECO:0007669"/>
    <property type="project" value="UniProtKB-SubCell"/>
</dbReference>
<dbReference type="GO" id="GO:0009898">
    <property type="term" value="C:cytoplasmic side of plasma membrane"/>
    <property type="evidence" value="ECO:0007669"/>
    <property type="project" value="TreeGrafter"/>
</dbReference>
<dbReference type="GO" id="GO:0005829">
    <property type="term" value="C:cytosol"/>
    <property type="evidence" value="ECO:0007669"/>
    <property type="project" value="TreeGrafter"/>
</dbReference>
<dbReference type="GO" id="GO:0005524">
    <property type="term" value="F:ATP binding"/>
    <property type="evidence" value="ECO:0007669"/>
    <property type="project" value="UniProtKB-KW"/>
</dbReference>
<dbReference type="GO" id="GO:0016887">
    <property type="term" value="F:ATP hydrolysis activity"/>
    <property type="evidence" value="ECO:0007669"/>
    <property type="project" value="InterPro"/>
</dbReference>
<dbReference type="GO" id="GO:0051301">
    <property type="term" value="P:cell division"/>
    <property type="evidence" value="ECO:0007669"/>
    <property type="project" value="UniProtKB-KW"/>
</dbReference>
<dbReference type="GO" id="GO:0051782">
    <property type="term" value="P:negative regulation of cell division"/>
    <property type="evidence" value="ECO:0007669"/>
    <property type="project" value="TreeGrafter"/>
</dbReference>
<dbReference type="CDD" id="cd02036">
    <property type="entry name" value="MinD"/>
    <property type="match status" value="1"/>
</dbReference>
<dbReference type="FunFam" id="3.40.50.300:FF:000068">
    <property type="entry name" value="Site-determining protein"/>
    <property type="match status" value="1"/>
</dbReference>
<dbReference type="Gene3D" id="3.40.50.300">
    <property type="entry name" value="P-loop containing nucleotide triphosphate hydrolases"/>
    <property type="match status" value="1"/>
</dbReference>
<dbReference type="InterPro" id="IPR010223">
    <property type="entry name" value="MinD"/>
</dbReference>
<dbReference type="InterPro" id="IPR025501">
    <property type="entry name" value="MinD_FleN"/>
</dbReference>
<dbReference type="InterPro" id="IPR027417">
    <property type="entry name" value="P-loop_NTPase"/>
</dbReference>
<dbReference type="InterPro" id="IPR050625">
    <property type="entry name" value="ParA/MinD_ATPase"/>
</dbReference>
<dbReference type="InterPro" id="IPR033756">
    <property type="entry name" value="YlxH/NBP35"/>
</dbReference>
<dbReference type="NCBIfam" id="TIGR01968">
    <property type="entry name" value="minD_bact"/>
    <property type="match status" value="1"/>
</dbReference>
<dbReference type="PANTHER" id="PTHR43384:SF6">
    <property type="entry name" value="SEPTUM SITE-DETERMINING PROTEIN MIND HOMOLOG, CHLOROPLASTIC"/>
    <property type="match status" value="1"/>
</dbReference>
<dbReference type="PANTHER" id="PTHR43384">
    <property type="entry name" value="SEPTUM SITE-DETERMINING PROTEIN MIND HOMOLOG, CHLOROPLASTIC-RELATED"/>
    <property type="match status" value="1"/>
</dbReference>
<dbReference type="Pfam" id="PF10609">
    <property type="entry name" value="ParA"/>
    <property type="match status" value="1"/>
</dbReference>
<dbReference type="PIRSF" id="PIRSF003092">
    <property type="entry name" value="MinD"/>
    <property type="match status" value="1"/>
</dbReference>
<dbReference type="SUPFAM" id="SSF52540">
    <property type="entry name" value="P-loop containing nucleoside triphosphate hydrolases"/>
    <property type="match status" value="1"/>
</dbReference>
<geneLocation type="chloroplast"/>
<comment type="function">
    <text evidence="1">ATPase required for the correct placement of the division site.</text>
</comment>
<comment type="subcellular location">
    <subcellularLocation>
        <location>Plastid</location>
        <location>Chloroplast</location>
    </subcellularLocation>
</comment>
<comment type="similarity">
    <text evidence="3">Belongs to the ParA family. MinD subfamily.</text>
</comment>
<accession>Q20EV4</accession>
<reference key="1">
    <citation type="journal article" date="2006" name="BMC Biol.">
        <title>The complete chloroplast DNA sequence of the green alga Oltmannsiellopsis viridis reveals a distinctive quadripartite architecture in the chloroplast genome of early diverging ulvophytes.</title>
        <authorList>
            <person name="Pombert J.-F."/>
            <person name="Lemieux C."/>
            <person name="Turmel M."/>
        </authorList>
    </citation>
    <scope>NUCLEOTIDE SEQUENCE [LARGE SCALE GENOMIC DNA]</scope>
</reference>
<keyword id="KW-0067">ATP-binding</keyword>
<keyword id="KW-0131">Cell cycle</keyword>
<keyword id="KW-0132">Cell division</keyword>
<keyword id="KW-0150">Chloroplast</keyword>
<keyword id="KW-0547">Nucleotide-binding</keyword>
<keyword id="KW-0934">Plastid</keyword>
<keyword id="KW-0717">Septation</keyword>